<evidence type="ECO:0000255" key="1">
    <source>
        <dbReference type="HAMAP-Rule" id="MF_00592"/>
    </source>
</evidence>
<protein>
    <recommendedName>
        <fullName evidence="1">Deoxyribose-phosphate aldolase</fullName>
        <shortName evidence="1">DERA</shortName>
        <ecNumber evidence="1">4.1.2.4</ecNumber>
    </recommendedName>
    <alternativeName>
        <fullName evidence="1">2-deoxy-D-ribose 5-phosphate aldolase</fullName>
    </alternativeName>
    <alternativeName>
        <fullName evidence="1">Phosphodeoxyriboaldolase</fullName>
        <shortName evidence="1">Deoxyriboaldolase</shortName>
    </alternativeName>
</protein>
<accession>B1KRP8</accession>
<dbReference type="EC" id="4.1.2.4" evidence="1"/>
<dbReference type="EMBL" id="CP000961">
    <property type="protein sequence ID" value="ACA87813.1"/>
    <property type="molecule type" value="Genomic_DNA"/>
</dbReference>
<dbReference type="RefSeq" id="WP_012326146.1">
    <property type="nucleotide sequence ID" value="NC_010506.1"/>
</dbReference>
<dbReference type="SMR" id="B1KRP8"/>
<dbReference type="STRING" id="392500.Swoo_3549"/>
<dbReference type="KEGG" id="swd:Swoo_3549"/>
<dbReference type="eggNOG" id="COG0274">
    <property type="taxonomic scope" value="Bacteria"/>
</dbReference>
<dbReference type="HOGENOM" id="CLU_053595_3_1_6"/>
<dbReference type="UniPathway" id="UPA00002">
    <property type="reaction ID" value="UER00468"/>
</dbReference>
<dbReference type="Proteomes" id="UP000002168">
    <property type="component" value="Chromosome"/>
</dbReference>
<dbReference type="GO" id="GO:0005737">
    <property type="term" value="C:cytoplasm"/>
    <property type="evidence" value="ECO:0007669"/>
    <property type="project" value="UniProtKB-SubCell"/>
</dbReference>
<dbReference type="GO" id="GO:0004139">
    <property type="term" value="F:deoxyribose-phosphate aldolase activity"/>
    <property type="evidence" value="ECO:0007669"/>
    <property type="project" value="UniProtKB-UniRule"/>
</dbReference>
<dbReference type="GO" id="GO:0006018">
    <property type="term" value="P:2-deoxyribose 1-phosphate catabolic process"/>
    <property type="evidence" value="ECO:0007669"/>
    <property type="project" value="UniProtKB-UniRule"/>
</dbReference>
<dbReference type="GO" id="GO:0016052">
    <property type="term" value="P:carbohydrate catabolic process"/>
    <property type="evidence" value="ECO:0007669"/>
    <property type="project" value="TreeGrafter"/>
</dbReference>
<dbReference type="GO" id="GO:0009264">
    <property type="term" value="P:deoxyribonucleotide catabolic process"/>
    <property type="evidence" value="ECO:0007669"/>
    <property type="project" value="InterPro"/>
</dbReference>
<dbReference type="CDD" id="cd00959">
    <property type="entry name" value="DeoC"/>
    <property type="match status" value="1"/>
</dbReference>
<dbReference type="Gene3D" id="3.20.20.70">
    <property type="entry name" value="Aldolase class I"/>
    <property type="match status" value="1"/>
</dbReference>
<dbReference type="HAMAP" id="MF_00592">
    <property type="entry name" value="DeoC_type2"/>
    <property type="match status" value="1"/>
</dbReference>
<dbReference type="InterPro" id="IPR013785">
    <property type="entry name" value="Aldolase_TIM"/>
</dbReference>
<dbReference type="InterPro" id="IPR011343">
    <property type="entry name" value="DeoC"/>
</dbReference>
<dbReference type="InterPro" id="IPR002915">
    <property type="entry name" value="DeoC/FbaB/LacD_aldolase"/>
</dbReference>
<dbReference type="InterPro" id="IPR023649">
    <property type="entry name" value="DeoC_typeII"/>
</dbReference>
<dbReference type="NCBIfam" id="TIGR00126">
    <property type="entry name" value="deoC"/>
    <property type="match status" value="1"/>
</dbReference>
<dbReference type="PANTHER" id="PTHR10889">
    <property type="entry name" value="DEOXYRIBOSE-PHOSPHATE ALDOLASE"/>
    <property type="match status" value="1"/>
</dbReference>
<dbReference type="PANTHER" id="PTHR10889:SF3">
    <property type="entry name" value="DEOXYRIBOSE-PHOSPHATE ALDOLASE"/>
    <property type="match status" value="1"/>
</dbReference>
<dbReference type="Pfam" id="PF01791">
    <property type="entry name" value="DeoC"/>
    <property type="match status" value="1"/>
</dbReference>
<dbReference type="PIRSF" id="PIRSF001357">
    <property type="entry name" value="DeoC"/>
    <property type="match status" value="1"/>
</dbReference>
<dbReference type="SMART" id="SM01133">
    <property type="entry name" value="DeoC"/>
    <property type="match status" value="1"/>
</dbReference>
<dbReference type="SUPFAM" id="SSF51569">
    <property type="entry name" value="Aldolase"/>
    <property type="match status" value="1"/>
</dbReference>
<keyword id="KW-0963">Cytoplasm</keyword>
<keyword id="KW-0456">Lyase</keyword>
<keyword id="KW-1185">Reference proteome</keyword>
<keyword id="KW-0704">Schiff base</keyword>
<proteinExistence type="inferred from homology"/>
<organism>
    <name type="scientific">Shewanella woodyi (strain ATCC 51908 / MS32)</name>
    <dbReference type="NCBI Taxonomy" id="392500"/>
    <lineage>
        <taxon>Bacteria</taxon>
        <taxon>Pseudomonadati</taxon>
        <taxon>Pseudomonadota</taxon>
        <taxon>Gammaproteobacteria</taxon>
        <taxon>Alteromonadales</taxon>
        <taxon>Shewanellaceae</taxon>
        <taxon>Shewanella</taxon>
    </lineage>
</organism>
<gene>
    <name evidence="1" type="primary">deoC</name>
    <name type="ordered locus">Swoo_3549</name>
</gene>
<sequence length="257" mass="27357">MSDLKKAAQKAIELMDLTTLNDDDTDQKVIELCHKAKTPAGNTAAICIYPRFIPIARKTLNELGCEDIKIATVTNFPHGNDDIAIAVLETRAAVAYGADEVDVVFPYRSLMEGNETLGFELVKACKEACGDDAILKVIIESGVLEDPALIRKASELCIDAGADFIKTSTGKVPVNATIEAAEIMMTVISEKNTKVGFKPAGGVRDAAAAGEFLGLAARLLGDDWATPATFRFGASSLLVNLLHTLELGEEAKGPQGY</sequence>
<reference key="1">
    <citation type="submission" date="2008-02" db="EMBL/GenBank/DDBJ databases">
        <title>Complete sequence of Shewanella woodyi ATCC 51908.</title>
        <authorList>
            <consortium name="US DOE Joint Genome Institute"/>
            <person name="Copeland A."/>
            <person name="Lucas S."/>
            <person name="Lapidus A."/>
            <person name="Glavina del Rio T."/>
            <person name="Dalin E."/>
            <person name="Tice H."/>
            <person name="Bruce D."/>
            <person name="Goodwin L."/>
            <person name="Pitluck S."/>
            <person name="Sims D."/>
            <person name="Brettin T."/>
            <person name="Detter J.C."/>
            <person name="Han C."/>
            <person name="Kuske C.R."/>
            <person name="Schmutz J."/>
            <person name="Larimer F."/>
            <person name="Land M."/>
            <person name="Hauser L."/>
            <person name="Kyrpides N."/>
            <person name="Lykidis A."/>
            <person name="Zhao J.-S."/>
            <person name="Richardson P."/>
        </authorList>
    </citation>
    <scope>NUCLEOTIDE SEQUENCE [LARGE SCALE GENOMIC DNA]</scope>
    <source>
        <strain>ATCC 51908 / MS32</strain>
    </source>
</reference>
<comment type="function">
    <text evidence="1">Catalyzes a reversible aldol reaction between acetaldehyde and D-glyceraldehyde 3-phosphate to generate 2-deoxy-D-ribose 5-phosphate.</text>
</comment>
<comment type="catalytic activity">
    <reaction evidence="1">
        <text>2-deoxy-D-ribose 5-phosphate = D-glyceraldehyde 3-phosphate + acetaldehyde</text>
        <dbReference type="Rhea" id="RHEA:12821"/>
        <dbReference type="ChEBI" id="CHEBI:15343"/>
        <dbReference type="ChEBI" id="CHEBI:59776"/>
        <dbReference type="ChEBI" id="CHEBI:62877"/>
        <dbReference type="EC" id="4.1.2.4"/>
    </reaction>
</comment>
<comment type="pathway">
    <text evidence="1">Carbohydrate degradation; 2-deoxy-D-ribose 1-phosphate degradation; D-glyceraldehyde 3-phosphate and acetaldehyde from 2-deoxy-alpha-D-ribose 1-phosphate: step 2/2.</text>
</comment>
<comment type="subcellular location">
    <subcellularLocation>
        <location evidence="1">Cytoplasm</location>
    </subcellularLocation>
</comment>
<comment type="similarity">
    <text evidence="1">Belongs to the DeoC/FbaB aldolase family. DeoC type 2 subfamily.</text>
</comment>
<feature type="chain" id="PRO_1000129814" description="Deoxyribose-phosphate aldolase">
    <location>
        <begin position="1"/>
        <end position="257"/>
    </location>
</feature>
<feature type="active site" description="Proton donor/acceptor" evidence="1">
    <location>
        <position position="102"/>
    </location>
</feature>
<feature type="active site" description="Schiff-base intermediate with acetaldehyde" evidence="1">
    <location>
        <position position="166"/>
    </location>
</feature>
<feature type="active site" description="Proton donor/acceptor" evidence="1">
    <location>
        <position position="198"/>
    </location>
</feature>
<name>DEOC_SHEWM</name>